<evidence type="ECO:0000250" key="1"/>
<evidence type="ECO:0000255" key="2"/>
<evidence type="ECO:0000255" key="3">
    <source>
        <dbReference type="PROSITE-ProRule" id="PRU01056"/>
    </source>
</evidence>
<evidence type="ECO:0000256" key="4">
    <source>
        <dbReference type="SAM" id="MobiDB-lite"/>
    </source>
</evidence>
<evidence type="ECO:0000269" key="5">
    <source>
    </source>
</evidence>
<feature type="chain" id="PRO_0000173503" description="Septin homolog spn1">
    <location>
        <begin position="1"/>
        <end position="469"/>
    </location>
</feature>
<feature type="domain" description="Septin-type G" evidence="3">
    <location>
        <begin position="92"/>
        <end position="367"/>
    </location>
</feature>
<feature type="region of interest" description="Disordered" evidence="4">
    <location>
        <begin position="1"/>
        <end position="58"/>
    </location>
</feature>
<feature type="region of interest" description="G1 motif" evidence="3">
    <location>
        <begin position="102"/>
        <end position="109"/>
    </location>
</feature>
<feature type="region of interest" description="G3 motif" evidence="3">
    <location>
        <begin position="162"/>
        <end position="165"/>
    </location>
</feature>
<feature type="region of interest" description="G4 motif" evidence="3">
    <location>
        <begin position="243"/>
        <end position="246"/>
    </location>
</feature>
<feature type="coiled-coil region" evidence="2">
    <location>
        <begin position="383"/>
        <end position="469"/>
    </location>
</feature>
<feature type="compositionally biased region" description="Basic and acidic residues" evidence="4">
    <location>
        <begin position="13"/>
        <end position="24"/>
    </location>
</feature>
<feature type="compositionally biased region" description="Polar residues" evidence="4">
    <location>
        <begin position="26"/>
        <end position="38"/>
    </location>
</feature>
<feature type="binding site" evidence="1">
    <location>
        <begin position="102"/>
        <end position="109"/>
    </location>
    <ligand>
        <name>GTP</name>
        <dbReference type="ChEBI" id="CHEBI:37565"/>
    </ligand>
</feature>
<feature type="binding site" evidence="1">
    <location>
        <position position="139"/>
    </location>
    <ligand>
        <name>GTP</name>
        <dbReference type="ChEBI" id="CHEBI:37565"/>
    </ligand>
</feature>
<feature type="binding site" evidence="1">
    <location>
        <position position="165"/>
    </location>
    <ligand>
        <name>GTP</name>
        <dbReference type="ChEBI" id="CHEBI:37565"/>
    </ligand>
</feature>
<feature type="binding site" evidence="1">
    <location>
        <begin position="244"/>
        <end position="252"/>
    </location>
    <ligand>
        <name>GTP</name>
        <dbReference type="ChEBI" id="CHEBI:37565"/>
    </ligand>
</feature>
<feature type="binding site" evidence="1">
    <location>
        <position position="317"/>
    </location>
    <ligand>
        <name>GTP</name>
        <dbReference type="ChEBI" id="CHEBI:37565"/>
    </ligand>
</feature>
<organism>
    <name type="scientific">Schizosaccharomyces pombe (strain 972 / ATCC 24843)</name>
    <name type="common">Fission yeast</name>
    <dbReference type="NCBI Taxonomy" id="284812"/>
    <lineage>
        <taxon>Eukaryota</taxon>
        <taxon>Fungi</taxon>
        <taxon>Dikarya</taxon>
        <taxon>Ascomycota</taxon>
        <taxon>Taphrinomycotina</taxon>
        <taxon>Schizosaccharomycetes</taxon>
        <taxon>Schizosaccharomycetales</taxon>
        <taxon>Schizosaccharomycetaceae</taxon>
        <taxon>Schizosaccharomyces</taxon>
    </lineage>
</organism>
<dbReference type="EMBL" id="U31742">
    <property type="protein sequence ID" value="AAB53692.2"/>
    <property type="molecule type" value="Genomic_DNA"/>
</dbReference>
<dbReference type="EMBL" id="CU329670">
    <property type="protein sequence ID" value="CAB11714.2"/>
    <property type="molecule type" value="Genomic_DNA"/>
</dbReference>
<dbReference type="PIR" id="T38815">
    <property type="entry name" value="T38815"/>
</dbReference>
<dbReference type="PIR" id="T52562">
    <property type="entry name" value="T52562"/>
</dbReference>
<dbReference type="RefSeq" id="NP_594754.1">
    <property type="nucleotide sequence ID" value="NM_001020181.2"/>
</dbReference>
<dbReference type="SMR" id="O36023"/>
<dbReference type="BioGRID" id="279934">
    <property type="interactions" value="75"/>
</dbReference>
<dbReference type="FunCoup" id="O36023">
    <property type="interactions" value="154"/>
</dbReference>
<dbReference type="STRING" id="284812.O36023"/>
<dbReference type="iPTMnet" id="O36023"/>
<dbReference type="PaxDb" id="4896-SPAC4F10.11.1"/>
<dbReference type="EnsemblFungi" id="SPAC4F10.11.1">
    <property type="protein sequence ID" value="SPAC4F10.11.1:pep"/>
    <property type="gene ID" value="SPAC4F10.11"/>
</dbReference>
<dbReference type="GeneID" id="2543516"/>
<dbReference type="KEGG" id="spo:2543516"/>
<dbReference type="PomBase" id="SPAC4F10.11">
    <property type="gene designation" value="spn1"/>
</dbReference>
<dbReference type="VEuPathDB" id="FungiDB:SPAC4F10.11"/>
<dbReference type="eggNOG" id="KOG2655">
    <property type="taxonomic scope" value="Eukaryota"/>
</dbReference>
<dbReference type="HOGENOM" id="CLU_017718_8_0_1"/>
<dbReference type="InParanoid" id="O36023"/>
<dbReference type="OMA" id="RSNPMGS"/>
<dbReference type="PhylomeDB" id="O36023"/>
<dbReference type="PRO" id="PR:O36023"/>
<dbReference type="Proteomes" id="UP000002485">
    <property type="component" value="Chromosome I"/>
</dbReference>
<dbReference type="GO" id="GO:0032153">
    <property type="term" value="C:cell division site"/>
    <property type="evidence" value="ECO:0000318"/>
    <property type="project" value="GO_Central"/>
</dbReference>
<dbReference type="GO" id="GO:0005737">
    <property type="term" value="C:cytoplasm"/>
    <property type="evidence" value="ECO:0007005"/>
    <property type="project" value="PomBase"/>
</dbReference>
<dbReference type="GO" id="GO:0005829">
    <property type="term" value="C:cytosol"/>
    <property type="evidence" value="ECO:0007005"/>
    <property type="project" value="PomBase"/>
</dbReference>
<dbReference type="GO" id="GO:0031097">
    <property type="term" value="C:medial cortex"/>
    <property type="evidence" value="ECO:0000314"/>
    <property type="project" value="PomBase"/>
</dbReference>
<dbReference type="GO" id="GO:0036391">
    <property type="term" value="C:medial cortex septin ring"/>
    <property type="evidence" value="ECO:0000314"/>
    <property type="project" value="PomBase"/>
</dbReference>
<dbReference type="GO" id="GO:0015630">
    <property type="term" value="C:microtubule cytoskeleton"/>
    <property type="evidence" value="ECO:0000318"/>
    <property type="project" value="GO_Central"/>
</dbReference>
<dbReference type="GO" id="GO:0120104">
    <property type="term" value="C:mitotic actomyosin contractile ring, proximal layer"/>
    <property type="evidence" value="ECO:0000314"/>
    <property type="project" value="PomBase"/>
</dbReference>
<dbReference type="GO" id="GO:0032151">
    <property type="term" value="C:mitotic septin complex"/>
    <property type="evidence" value="ECO:0000314"/>
    <property type="project" value="PomBase"/>
</dbReference>
<dbReference type="GO" id="GO:0005634">
    <property type="term" value="C:nucleus"/>
    <property type="evidence" value="ECO:0007005"/>
    <property type="project" value="PomBase"/>
</dbReference>
<dbReference type="GO" id="GO:0031105">
    <property type="term" value="C:septin complex"/>
    <property type="evidence" value="ECO:0000318"/>
    <property type="project" value="GO_Central"/>
</dbReference>
<dbReference type="GO" id="GO:0005940">
    <property type="term" value="C:septin ring"/>
    <property type="evidence" value="ECO:0000318"/>
    <property type="project" value="GO_Central"/>
</dbReference>
<dbReference type="GO" id="GO:0005525">
    <property type="term" value="F:GTP binding"/>
    <property type="evidence" value="ECO:0000255"/>
    <property type="project" value="PomBase"/>
</dbReference>
<dbReference type="GO" id="GO:0003924">
    <property type="term" value="F:GTPase activity"/>
    <property type="evidence" value="ECO:0000318"/>
    <property type="project" value="GO_Central"/>
</dbReference>
<dbReference type="GO" id="GO:0060090">
    <property type="term" value="F:molecular adaptor activity"/>
    <property type="evidence" value="ECO:0000318"/>
    <property type="project" value="GO_Central"/>
</dbReference>
<dbReference type="GO" id="GO:0061640">
    <property type="term" value="P:cytoskeleton-dependent cytokinesis"/>
    <property type="evidence" value="ECO:0000318"/>
    <property type="project" value="GO_Central"/>
</dbReference>
<dbReference type="GO" id="GO:0000281">
    <property type="term" value="P:mitotic cytokinesis"/>
    <property type="evidence" value="ECO:0000315"/>
    <property type="project" value="PomBase"/>
</dbReference>
<dbReference type="GO" id="GO:0008104">
    <property type="term" value="P:protein localization"/>
    <property type="evidence" value="ECO:0000318"/>
    <property type="project" value="GO_Central"/>
</dbReference>
<dbReference type="CDD" id="cd01850">
    <property type="entry name" value="CDC_Septin"/>
    <property type="match status" value="1"/>
</dbReference>
<dbReference type="FunFam" id="3.40.50.300:FF:000162">
    <property type="entry name" value="septin-7 isoform X1"/>
    <property type="match status" value="1"/>
</dbReference>
<dbReference type="Gene3D" id="3.40.50.300">
    <property type="entry name" value="P-loop containing nucleotide triphosphate hydrolases"/>
    <property type="match status" value="1"/>
</dbReference>
<dbReference type="InterPro" id="IPR030379">
    <property type="entry name" value="G_SEPTIN_dom"/>
</dbReference>
<dbReference type="InterPro" id="IPR027417">
    <property type="entry name" value="P-loop_NTPase"/>
</dbReference>
<dbReference type="InterPro" id="IPR016491">
    <property type="entry name" value="Septin"/>
</dbReference>
<dbReference type="InterPro" id="IPR025662">
    <property type="entry name" value="Sigma_54_int_dom_ATP-bd_1"/>
</dbReference>
<dbReference type="PANTHER" id="PTHR18884">
    <property type="entry name" value="SEPTIN"/>
    <property type="match status" value="1"/>
</dbReference>
<dbReference type="Pfam" id="PF00735">
    <property type="entry name" value="Septin"/>
    <property type="match status" value="1"/>
</dbReference>
<dbReference type="PIRSF" id="PIRSF006698">
    <property type="entry name" value="Septin"/>
    <property type="match status" value="1"/>
</dbReference>
<dbReference type="SUPFAM" id="SSF52540">
    <property type="entry name" value="P-loop containing nucleoside triphosphate hydrolases"/>
    <property type="match status" value="1"/>
</dbReference>
<dbReference type="PROSITE" id="PS51719">
    <property type="entry name" value="G_SEPTIN"/>
    <property type="match status" value="1"/>
</dbReference>
<gene>
    <name type="primary">spn1</name>
    <name type="ORF">SPAC4F10.11</name>
</gene>
<sequence length="469" mass="53738">MASMVLADGMPTVKDDSTRSRGSDVDSFTSTDNVTQINVEAAISENKNEEKPIQDNSEQEFNPHVSIIQRQLNGYVGFASLPNQWHRRCVRQGFNFNVLVLGESGSGKSTLVNTLLNRDVYPPTQKSLTGDFGVNPEPTVMINSSAVEIVENGISLQLNVIDTPGFGDFIDNTDCWQPVLTDIEGRYDQYLELEKHNPRSTIQDPRVHACIFFIQPTGHAISAMELRVMLALHEKVNIIPIIAKADTLTDDELNFTKEMILRDIQYHNIRIFFPPTYETDDPESVAENADIMSRIPFAIIASNTFVVNNEGKRVRGRRYPWGVVEVDNEEHSDFPKLREMLIRTHLEELKEQTNKLYEAYRTERLLSSGISQDHSVFREVNPSAKLEEERALHEEKLMKMEAEMKTIFSQKVQEKEDRLKQSENELRTRHREMKAALEKQKADLIDHKNRLMQAKAAAENEKSKRKFFK</sequence>
<keyword id="KW-0131">Cell cycle</keyword>
<keyword id="KW-0132">Cell division</keyword>
<keyword id="KW-0175">Coiled coil</keyword>
<keyword id="KW-0963">Cytoplasm</keyword>
<keyword id="KW-0342">GTP-binding</keyword>
<keyword id="KW-0498">Mitosis</keyword>
<keyword id="KW-0547">Nucleotide-binding</keyword>
<keyword id="KW-1185">Reference proteome</keyword>
<reference key="1">
    <citation type="journal article" date="1996" name="Curr. Opin. Cell Biol.">
        <title>The septins: roles in cytokinesis and other processes.</title>
        <authorList>
            <person name="Longtine M.S."/>
            <person name="DeMarini D.J."/>
            <person name="Valencik M.L."/>
            <person name="Al-Awar O.S."/>
            <person name="Fares H."/>
            <person name="De Virgilio C."/>
            <person name="Pringle J.R."/>
        </authorList>
    </citation>
    <scope>NUCLEOTIDE SEQUENCE [GENOMIC DNA]</scope>
</reference>
<reference key="2">
    <citation type="submission" date="2001-09" db="EMBL/GenBank/DDBJ databases">
        <authorList>
            <person name="Al-Awar O.S."/>
        </authorList>
    </citation>
    <scope>SEQUENCE REVISION</scope>
</reference>
<reference key="3">
    <citation type="journal article" date="2002" name="Nature">
        <title>The genome sequence of Schizosaccharomyces pombe.</title>
        <authorList>
            <person name="Wood V."/>
            <person name="Gwilliam R."/>
            <person name="Rajandream M.A."/>
            <person name="Lyne M.H."/>
            <person name="Lyne R."/>
            <person name="Stewart A."/>
            <person name="Sgouros J.G."/>
            <person name="Peat N."/>
            <person name="Hayles J."/>
            <person name="Baker S.G."/>
            <person name="Basham D."/>
            <person name="Bowman S."/>
            <person name="Brooks K."/>
            <person name="Brown D."/>
            <person name="Brown S."/>
            <person name="Chillingworth T."/>
            <person name="Churcher C.M."/>
            <person name="Collins M."/>
            <person name="Connor R."/>
            <person name="Cronin A."/>
            <person name="Davis P."/>
            <person name="Feltwell T."/>
            <person name="Fraser A."/>
            <person name="Gentles S."/>
            <person name="Goble A."/>
            <person name="Hamlin N."/>
            <person name="Harris D.E."/>
            <person name="Hidalgo J."/>
            <person name="Hodgson G."/>
            <person name="Holroyd S."/>
            <person name="Hornsby T."/>
            <person name="Howarth S."/>
            <person name="Huckle E.J."/>
            <person name="Hunt S."/>
            <person name="Jagels K."/>
            <person name="James K.D."/>
            <person name="Jones L."/>
            <person name="Jones M."/>
            <person name="Leather S."/>
            <person name="McDonald S."/>
            <person name="McLean J."/>
            <person name="Mooney P."/>
            <person name="Moule S."/>
            <person name="Mungall K.L."/>
            <person name="Murphy L.D."/>
            <person name="Niblett D."/>
            <person name="Odell C."/>
            <person name="Oliver K."/>
            <person name="O'Neil S."/>
            <person name="Pearson D."/>
            <person name="Quail M.A."/>
            <person name="Rabbinowitsch E."/>
            <person name="Rutherford K.M."/>
            <person name="Rutter S."/>
            <person name="Saunders D."/>
            <person name="Seeger K."/>
            <person name="Sharp S."/>
            <person name="Skelton J."/>
            <person name="Simmonds M.N."/>
            <person name="Squares R."/>
            <person name="Squares S."/>
            <person name="Stevens K."/>
            <person name="Taylor K."/>
            <person name="Taylor R.G."/>
            <person name="Tivey A."/>
            <person name="Walsh S.V."/>
            <person name="Warren T."/>
            <person name="Whitehead S."/>
            <person name="Woodward J.R."/>
            <person name="Volckaert G."/>
            <person name="Aert R."/>
            <person name="Robben J."/>
            <person name="Grymonprez B."/>
            <person name="Weltjens I."/>
            <person name="Vanstreels E."/>
            <person name="Rieger M."/>
            <person name="Schaefer M."/>
            <person name="Mueller-Auer S."/>
            <person name="Gabel C."/>
            <person name="Fuchs M."/>
            <person name="Duesterhoeft A."/>
            <person name="Fritzc C."/>
            <person name="Holzer E."/>
            <person name="Moestl D."/>
            <person name="Hilbert H."/>
            <person name="Borzym K."/>
            <person name="Langer I."/>
            <person name="Beck A."/>
            <person name="Lehrach H."/>
            <person name="Reinhardt R."/>
            <person name="Pohl T.M."/>
            <person name="Eger P."/>
            <person name="Zimmermann W."/>
            <person name="Wedler H."/>
            <person name="Wambutt R."/>
            <person name="Purnelle B."/>
            <person name="Goffeau A."/>
            <person name="Cadieu E."/>
            <person name="Dreano S."/>
            <person name="Gloux S."/>
            <person name="Lelaure V."/>
            <person name="Mottier S."/>
            <person name="Galibert F."/>
            <person name="Aves S.J."/>
            <person name="Xiang Z."/>
            <person name="Hunt C."/>
            <person name="Moore K."/>
            <person name="Hurst S.M."/>
            <person name="Lucas M."/>
            <person name="Rochet M."/>
            <person name="Gaillardin C."/>
            <person name="Tallada V.A."/>
            <person name="Garzon A."/>
            <person name="Thode G."/>
            <person name="Daga R.R."/>
            <person name="Cruzado L."/>
            <person name="Jimenez J."/>
            <person name="Sanchez M."/>
            <person name="del Rey F."/>
            <person name="Benito J."/>
            <person name="Dominguez A."/>
            <person name="Revuelta J.L."/>
            <person name="Moreno S."/>
            <person name="Armstrong J."/>
            <person name="Forsburg S.L."/>
            <person name="Cerutti L."/>
            <person name="Lowe T."/>
            <person name="McCombie W.R."/>
            <person name="Paulsen I."/>
            <person name="Potashkin J."/>
            <person name="Shpakovski G.V."/>
            <person name="Ussery D."/>
            <person name="Barrell B.G."/>
            <person name="Nurse P."/>
        </authorList>
    </citation>
    <scope>NUCLEOTIDE SEQUENCE [LARGE SCALE GENOMIC DNA]</scope>
    <source>
        <strain>972 / ATCC 24843</strain>
    </source>
</reference>
<reference key="4">
    <citation type="journal article" date="2004" name="Mol. Biol. Cell">
        <title>Requirements of fission yeast septins for complex formation, localization, and function.</title>
        <authorList>
            <person name="An H."/>
            <person name="Morrell J.L."/>
            <person name="Jennings J.L."/>
            <person name="Link A.J."/>
            <person name="Gould K.L."/>
        </authorList>
    </citation>
    <scope>FUNCTION</scope>
    <scope>SUBCELLULAR LOCATION</scope>
    <scope>IDENTIFICATION IN THE SEPTIN COMPLEX</scope>
    <scope>IDENTIFICATION BY MASS SPECTROMETRY</scope>
</reference>
<name>SPN1_SCHPO</name>
<comment type="function">
    <text evidence="5">Plays a role in the cell cycle. Involved in a late stage of septum formation leading to the separation of the daughter cells.</text>
</comment>
<comment type="subunit">
    <text evidence="5">Component of the septin complex composed of two copies of each spn1, spn2, spn3 and spn4.</text>
</comment>
<comment type="subcellular location">
    <subcellularLocation>
        <location evidence="5">Cytoplasm</location>
        <location evidence="5">Cell cortex</location>
    </subcellularLocation>
    <text>Localizes to the medial ring at the cell cortex of dividing cells.</text>
</comment>
<comment type="similarity">
    <text evidence="3">Belongs to the TRAFAC class TrmE-Era-EngA-EngB-Septin-like GTPase superfamily. Septin GTPase family.</text>
</comment>
<proteinExistence type="evidence at protein level"/>
<protein>
    <recommendedName>
        <fullName>Septin homolog spn1</fullName>
    </recommendedName>
</protein>
<accession>O36023</accession>
<accession>Q09126</accession>